<sequence>MKVTQIRQAYLDFFAQKGHQIVPSSPVVPGDDPTLLFTNAGMNQFKDVFLGFDKRSYTRATTAQKCIRAGGKHNDLDNVGYTARHHTFFEMLGNFSFGDYFKKDAIQFAWDLLTQVFELPKDKLLVTVYAEDDEAYAIWKDQIGVPAERIIRIGDNKGARYASDNFWMMGDTGPCGPCTEIFYDHGEHIPGGPPGSPDEDGDRFIEIWNNVFMQFNRDEAGVMHPLPKPSVDTGMGLERIAAVLQHVHSNYEIDLFVNLIKAAKDTVDGAGGENCDAQSPSLKVIADHIRACSFIVVDGVIPGNAGRGYVLRRIARRAIRHGYKLGARKPFFYQLVPALVKEMGDAYPELRAAQDKVSEVLKQEEERFFQTIANGMEILDGALAGGAKVVDGETAFRLHDTFGFPLDLTADVCRERGVTVDSEGFEVAMQKQRDQARAAGKFKVAQGLDYKGVPTRFHGYETLKHEGAKITALYLDGSAVNSVKAGDAAVVVLDNTPFYAESGGQVGDKGELRNEAARFTVDDTFKIQADVFGHQGEVLEGELKVGDTLNALVDIALRNDTMRNHSATHILHKALREVLGDHVQQKGSLVDASKTRFDFTHNAPITAEQIRRIEDIVNAEILDNSATSGKVMSLEDAQKTGAMMLFGEKYGDEVRVLEIGSSKELCGGTHVSRTGDIGSLKIVSEGGVAAGIRRVEAVTGQNALHFLQGLEDKINEAATILKTHPGDLVNRVAQLQESLRLAERELEKVNSKLAASQGDELAGQAIDVNGLKVLAARLDGADAGVLRETMDALKAKLKTAAIVLASVQGDKVSLIAGVTADSIAKVKAGDLVNFVAQQVGGKGGGKPEMAMAGGNDPSKLGAALDGVKDWVASK</sequence>
<accession>A4SZL8</accession>
<keyword id="KW-0030">Aminoacyl-tRNA synthetase</keyword>
<keyword id="KW-0067">ATP-binding</keyword>
<keyword id="KW-0963">Cytoplasm</keyword>
<keyword id="KW-0436">Ligase</keyword>
<keyword id="KW-0479">Metal-binding</keyword>
<keyword id="KW-0547">Nucleotide-binding</keyword>
<keyword id="KW-0648">Protein biosynthesis</keyword>
<keyword id="KW-1185">Reference proteome</keyword>
<keyword id="KW-0694">RNA-binding</keyword>
<keyword id="KW-0820">tRNA-binding</keyword>
<keyword id="KW-0862">Zinc</keyword>
<name>SYA_POLAQ</name>
<gene>
    <name evidence="1" type="primary">alaS</name>
    <name type="ordered locus">Pnuc_1719</name>
</gene>
<feature type="chain" id="PRO_0000347722" description="Alanine--tRNA ligase">
    <location>
        <begin position="1"/>
        <end position="874"/>
    </location>
</feature>
<feature type="binding site" evidence="1">
    <location>
        <position position="565"/>
    </location>
    <ligand>
        <name>Zn(2+)</name>
        <dbReference type="ChEBI" id="CHEBI:29105"/>
    </ligand>
</feature>
<feature type="binding site" evidence="1">
    <location>
        <position position="569"/>
    </location>
    <ligand>
        <name>Zn(2+)</name>
        <dbReference type="ChEBI" id="CHEBI:29105"/>
    </ligand>
</feature>
<feature type="binding site" evidence="1">
    <location>
        <position position="666"/>
    </location>
    <ligand>
        <name>Zn(2+)</name>
        <dbReference type="ChEBI" id="CHEBI:29105"/>
    </ligand>
</feature>
<feature type="binding site" evidence="1">
    <location>
        <position position="670"/>
    </location>
    <ligand>
        <name>Zn(2+)</name>
        <dbReference type="ChEBI" id="CHEBI:29105"/>
    </ligand>
</feature>
<proteinExistence type="inferred from homology"/>
<organism>
    <name type="scientific">Polynucleobacter asymbioticus (strain DSM 18221 / CIP 109841 / QLW-P1DMWA-1)</name>
    <name type="common">Polynucleobacter necessarius subsp. asymbioticus</name>
    <dbReference type="NCBI Taxonomy" id="312153"/>
    <lineage>
        <taxon>Bacteria</taxon>
        <taxon>Pseudomonadati</taxon>
        <taxon>Pseudomonadota</taxon>
        <taxon>Betaproteobacteria</taxon>
        <taxon>Burkholderiales</taxon>
        <taxon>Burkholderiaceae</taxon>
        <taxon>Polynucleobacter</taxon>
    </lineage>
</organism>
<protein>
    <recommendedName>
        <fullName evidence="1">Alanine--tRNA ligase</fullName>
        <ecNumber evidence="1">6.1.1.7</ecNumber>
    </recommendedName>
    <alternativeName>
        <fullName evidence="1">Alanyl-tRNA synthetase</fullName>
        <shortName evidence="1">AlaRS</shortName>
    </alternativeName>
</protein>
<reference key="1">
    <citation type="journal article" date="2012" name="Stand. Genomic Sci.">
        <title>Complete genome sequence of Polynucleobacter necessarius subsp. asymbioticus type strain (QLW-P1DMWA-1(T)).</title>
        <authorList>
            <person name="Meincke L."/>
            <person name="Copeland A."/>
            <person name="Lapidus A."/>
            <person name="Lucas S."/>
            <person name="Berry K.W."/>
            <person name="Del Rio T.G."/>
            <person name="Hammon N."/>
            <person name="Dalin E."/>
            <person name="Tice H."/>
            <person name="Pitluck S."/>
            <person name="Richardson P."/>
            <person name="Bruce D."/>
            <person name="Goodwin L."/>
            <person name="Han C."/>
            <person name="Tapia R."/>
            <person name="Detter J.C."/>
            <person name="Schmutz J."/>
            <person name="Brettin T."/>
            <person name="Larimer F."/>
            <person name="Land M."/>
            <person name="Hauser L."/>
            <person name="Kyrpides N.C."/>
            <person name="Ivanova N."/>
            <person name="Goker M."/>
            <person name="Woyke T."/>
            <person name="Wu Q.L."/>
            <person name="Pockl M."/>
            <person name="Hahn M.W."/>
            <person name="Klenk H.P."/>
        </authorList>
    </citation>
    <scope>NUCLEOTIDE SEQUENCE [LARGE SCALE GENOMIC DNA]</scope>
    <source>
        <strain>DSM 18221 / CIP 109841 / QLW-P1DMWA-1</strain>
    </source>
</reference>
<comment type="function">
    <text evidence="1">Catalyzes the attachment of alanine to tRNA(Ala) in a two-step reaction: alanine is first activated by ATP to form Ala-AMP and then transferred to the acceptor end of tRNA(Ala). Also edits incorrectly charged Ser-tRNA(Ala) and Gly-tRNA(Ala) via its editing domain.</text>
</comment>
<comment type="catalytic activity">
    <reaction evidence="1">
        <text>tRNA(Ala) + L-alanine + ATP = L-alanyl-tRNA(Ala) + AMP + diphosphate</text>
        <dbReference type="Rhea" id="RHEA:12540"/>
        <dbReference type="Rhea" id="RHEA-COMP:9657"/>
        <dbReference type="Rhea" id="RHEA-COMP:9923"/>
        <dbReference type="ChEBI" id="CHEBI:30616"/>
        <dbReference type="ChEBI" id="CHEBI:33019"/>
        <dbReference type="ChEBI" id="CHEBI:57972"/>
        <dbReference type="ChEBI" id="CHEBI:78442"/>
        <dbReference type="ChEBI" id="CHEBI:78497"/>
        <dbReference type="ChEBI" id="CHEBI:456215"/>
        <dbReference type="EC" id="6.1.1.7"/>
    </reaction>
</comment>
<comment type="cofactor">
    <cofactor evidence="1">
        <name>Zn(2+)</name>
        <dbReference type="ChEBI" id="CHEBI:29105"/>
    </cofactor>
    <text evidence="1">Binds 1 zinc ion per subunit.</text>
</comment>
<comment type="subcellular location">
    <subcellularLocation>
        <location evidence="1">Cytoplasm</location>
    </subcellularLocation>
</comment>
<comment type="domain">
    <text evidence="1">Consists of three domains; the N-terminal catalytic domain, the editing domain and the C-terminal C-Ala domain. The editing domain removes incorrectly charged amino acids, while the C-Ala domain, along with tRNA(Ala), serves as a bridge to cooperatively bring together the editing and aminoacylation centers thus stimulating deacylation of misacylated tRNAs.</text>
</comment>
<comment type="similarity">
    <text evidence="1">Belongs to the class-II aminoacyl-tRNA synthetase family.</text>
</comment>
<evidence type="ECO:0000255" key="1">
    <source>
        <dbReference type="HAMAP-Rule" id="MF_00036"/>
    </source>
</evidence>
<dbReference type="EC" id="6.1.1.7" evidence="1"/>
<dbReference type="EMBL" id="CP000655">
    <property type="protein sequence ID" value="ABP34932.1"/>
    <property type="molecule type" value="Genomic_DNA"/>
</dbReference>
<dbReference type="RefSeq" id="WP_011903555.1">
    <property type="nucleotide sequence ID" value="NC_009379.1"/>
</dbReference>
<dbReference type="SMR" id="A4SZL8"/>
<dbReference type="GeneID" id="31482108"/>
<dbReference type="KEGG" id="pnu:Pnuc_1719"/>
<dbReference type="eggNOG" id="COG0013">
    <property type="taxonomic scope" value="Bacteria"/>
</dbReference>
<dbReference type="HOGENOM" id="CLU_004485_1_1_4"/>
<dbReference type="Proteomes" id="UP000000231">
    <property type="component" value="Chromosome"/>
</dbReference>
<dbReference type="GO" id="GO:0005829">
    <property type="term" value="C:cytosol"/>
    <property type="evidence" value="ECO:0007669"/>
    <property type="project" value="TreeGrafter"/>
</dbReference>
<dbReference type="GO" id="GO:0004813">
    <property type="term" value="F:alanine-tRNA ligase activity"/>
    <property type="evidence" value="ECO:0007669"/>
    <property type="project" value="UniProtKB-UniRule"/>
</dbReference>
<dbReference type="GO" id="GO:0002161">
    <property type="term" value="F:aminoacyl-tRNA deacylase activity"/>
    <property type="evidence" value="ECO:0007669"/>
    <property type="project" value="TreeGrafter"/>
</dbReference>
<dbReference type="GO" id="GO:0005524">
    <property type="term" value="F:ATP binding"/>
    <property type="evidence" value="ECO:0007669"/>
    <property type="project" value="UniProtKB-UniRule"/>
</dbReference>
<dbReference type="GO" id="GO:0000049">
    <property type="term" value="F:tRNA binding"/>
    <property type="evidence" value="ECO:0007669"/>
    <property type="project" value="UniProtKB-KW"/>
</dbReference>
<dbReference type="GO" id="GO:0008270">
    <property type="term" value="F:zinc ion binding"/>
    <property type="evidence" value="ECO:0007669"/>
    <property type="project" value="UniProtKB-UniRule"/>
</dbReference>
<dbReference type="GO" id="GO:0006419">
    <property type="term" value="P:alanyl-tRNA aminoacylation"/>
    <property type="evidence" value="ECO:0007669"/>
    <property type="project" value="UniProtKB-UniRule"/>
</dbReference>
<dbReference type="GO" id="GO:0045892">
    <property type="term" value="P:negative regulation of DNA-templated transcription"/>
    <property type="evidence" value="ECO:0007669"/>
    <property type="project" value="TreeGrafter"/>
</dbReference>
<dbReference type="CDD" id="cd00673">
    <property type="entry name" value="AlaRS_core"/>
    <property type="match status" value="1"/>
</dbReference>
<dbReference type="FunFam" id="2.40.30.130:FF:000001">
    <property type="entry name" value="Alanine--tRNA ligase"/>
    <property type="match status" value="1"/>
</dbReference>
<dbReference type="FunFam" id="3.10.310.40:FF:000001">
    <property type="entry name" value="Alanine--tRNA ligase"/>
    <property type="match status" value="1"/>
</dbReference>
<dbReference type="FunFam" id="3.30.54.20:FF:000001">
    <property type="entry name" value="Alanine--tRNA ligase"/>
    <property type="match status" value="1"/>
</dbReference>
<dbReference type="FunFam" id="3.30.930.10:FF:000004">
    <property type="entry name" value="Alanine--tRNA ligase"/>
    <property type="match status" value="1"/>
</dbReference>
<dbReference type="FunFam" id="3.30.980.10:FF:000004">
    <property type="entry name" value="Alanine--tRNA ligase, cytoplasmic"/>
    <property type="match status" value="1"/>
</dbReference>
<dbReference type="Gene3D" id="2.40.30.130">
    <property type="match status" value="1"/>
</dbReference>
<dbReference type="Gene3D" id="3.10.310.40">
    <property type="match status" value="1"/>
</dbReference>
<dbReference type="Gene3D" id="3.30.54.20">
    <property type="match status" value="1"/>
</dbReference>
<dbReference type="Gene3D" id="6.10.250.550">
    <property type="match status" value="1"/>
</dbReference>
<dbReference type="Gene3D" id="3.30.930.10">
    <property type="entry name" value="Bira Bifunctional Protein, Domain 2"/>
    <property type="match status" value="1"/>
</dbReference>
<dbReference type="Gene3D" id="3.30.980.10">
    <property type="entry name" value="Threonyl-trna Synthetase, Chain A, domain 2"/>
    <property type="match status" value="1"/>
</dbReference>
<dbReference type="HAMAP" id="MF_00036_B">
    <property type="entry name" value="Ala_tRNA_synth_B"/>
    <property type="match status" value="1"/>
</dbReference>
<dbReference type="InterPro" id="IPR045864">
    <property type="entry name" value="aa-tRNA-synth_II/BPL/LPL"/>
</dbReference>
<dbReference type="InterPro" id="IPR002318">
    <property type="entry name" value="Ala-tRNA-lgiase_IIc"/>
</dbReference>
<dbReference type="InterPro" id="IPR018162">
    <property type="entry name" value="Ala-tRNA-ligase_IIc_anticod-bd"/>
</dbReference>
<dbReference type="InterPro" id="IPR018165">
    <property type="entry name" value="Ala-tRNA-synth_IIc_core"/>
</dbReference>
<dbReference type="InterPro" id="IPR018164">
    <property type="entry name" value="Ala-tRNA-synth_IIc_N"/>
</dbReference>
<dbReference type="InterPro" id="IPR050058">
    <property type="entry name" value="Ala-tRNA_ligase"/>
</dbReference>
<dbReference type="InterPro" id="IPR023033">
    <property type="entry name" value="Ala_tRNA_ligase_euk/bac"/>
</dbReference>
<dbReference type="InterPro" id="IPR003156">
    <property type="entry name" value="DHHA1_dom"/>
</dbReference>
<dbReference type="InterPro" id="IPR018163">
    <property type="entry name" value="Thr/Ala-tRNA-synth_IIc_edit"/>
</dbReference>
<dbReference type="InterPro" id="IPR009000">
    <property type="entry name" value="Transl_B-barrel_sf"/>
</dbReference>
<dbReference type="InterPro" id="IPR012947">
    <property type="entry name" value="tRNA_SAD"/>
</dbReference>
<dbReference type="NCBIfam" id="TIGR00344">
    <property type="entry name" value="alaS"/>
    <property type="match status" value="1"/>
</dbReference>
<dbReference type="PANTHER" id="PTHR11777:SF9">
    <property type="entry name" value="ALANINE--TRNA LIGASE, CYTOPLASMIC"/>
    <property type="match status" value="1"/>
</dbReference>
<dbReference type="PANTHER" id="PTHR11777">
    <property type="entry name" value="ALANYL-TRNA SYNTHETASE"/>
    <property type="match status" value="1"/>
</dbReference>
<dbReference type="Pfam" id="PF02272">
    <property type="entry name" value="DHHA1"/>
    <property type="match status" value="1"/>
</dbReference>
<dbReference type="Pfam" id="PF01411">
    <property type="entry name" value="tRNA-synt_2c"/>
    <property type="match status" value="1"/>
</dbReference>
<dbReference type="Pfam" id="PF07973">
    <property type="entry name" value="tRNA_SAD"/>
    <property type="match status" value="1"/>
</dbReference>
<dbReference type="PRINTS" id="PR00980">
    <property type="entry name" value="TRNASYNTHALA"/>
</dbReference>
<dbReference type="SMART" id="SM00863">
    <property type="entry name" value="tRNA_SAD"/>
    <property type="match status" value="1"/>
</dbReference>
<dbReference type="SUPFAM" id="SSF55681">
    <property type="entry name" value="Class II aaRS and biotin synthetases"/>
    <property type="match status" value="1"/>
</dbReference>
<dbReference type="SUPFAM" id="SSF101353">
    <property type="entry name" value="Putative anticodon-binding domain of alanyl-tRNA synthetase (AlaRS)"/>
    <property type="match status" value="1"/>
</dbReference>
<dbReference type="SUPFAM" id="SSF55186">
    <property type="entry name" value="ThrRS/AlaRS common domain"/>
    <property type="match status" value="1"/>
</dbReference>
<dbReference type="SUPFAM" id="SSF50447">
    <property type="entry name" value="Translation proteins"/>
    <property type="match status" value="1"/>
</dbReference>
<dbReference type="PROSITE" id="PS50860">
    <property type="entry name" value="AA_TRNA_LIGASE_II_ALA"/>
    <property type="match status" value="1"/>
</dbReference>